<reference key="1">
    <citation type="submission" date="2008-04" db="EMBL/GenBank/DDBJ databases">
        <title>Complete sequence of Yersinia pseudotuberculosis PB1/+.</title>
        <authorList>
            <person name="Copeland A."/>
            <person name="Lucas S."/>
            <person name="Lapidus A."/>
            <person name="Glavina del Rio T."/>
            <person name="Dalin E."/>
            <person name="Tice H."/>
            <person name="Bruce D."/>
            <person name="Goodwin L."/>
            <person name="Pitluck S."/>
            <person name="Munk A.C."/>
            <person name="Brettin T."/>
            <person name="Detter J.C."/>
            <person name="Han C."/>
            <person name="Tapia R."/>
            <person name="Schmutz J."/>
            <person name="Larimer F."/>
            <person name="Land M."/>
            <person name="Hauser L."/>
            <person name="Challacombe J.F."/>
            <person name="Green L."/>
            <person name="Lindler L.E."/>
            <person name="Nikolich M.P."/>
            <person name="Richardson P."/>
        </authorList>
    </citation>
    <scope>NUCLEOTIDE SEQUENCE [LARGE SCALE GENOMIC DNA]</scope>
    <source>
        <strain>PB1/+</strain>
    </source>
</reference>
<name>GLNE_YERPB</name>
<comment type="function">
    <text evidence="1">Involved in the regulation of glutamine synthetase GlnA, a key enzyme in the process to assimilate ammonia. When cellular nitrogen levels are high, the C-terminal adenylyl transferase (AT) inactivates GlnA by covalent transfer of an adenylyl group from ATP to specific tyrosine residue of GlnA, thus reducing its activity. Conversely, when nitrogen levels are low, the N-terminal adenylyl removase (AR) activates GlnA by removing the adenylyl group by phosphorolysis, increasing its activity. The regulatory region of GlnE binds the signal transduction protein PII (GlnB) which indicates the nitrogen status of the cell.</text>
</comment>
<comment type="catalytic activity">
    <reaction evidence="1">
        <text>[glutamine synthetase]-O(4)-(5'-adenylyl)-L-tyrosine + phosphate = [glutamine synthetase]-L-tyrosine + ADP</text>
        <dbReference type="Rhea" id="RHEA:43716"/>
        <dbReference type="Rhea" id="RHEA-COMP:10660"/>
        <dbReference type="Rhea" id="RHEA-COMP:10661"/>
        <dbReference type="ChEBI" id="CHEBI:43474"/>
        <dbReference type="ChEBI" id="CHEBI:46858"/>
        <dbReference type="ChEBI" id="CHEBI:83624"/>
        <dbReference type="ChEBI" id="CHEBI:456216"/>
        <dbReference type="EC" id="2.7.7.89"/>
    </reaction>
</comment>
<comment type="catalytic activity">
    <reaction evidence="1">
        <text>[glutamine synthetase]-L-tyrosine + ATP = [glutamine synthetase]-O(4)-(5'-adenylyl)-L-tyrosine + diphosphate</text>
        <dbReference type="Rhea" id="RHEA:18589"/>
        <dbReference type="Rhea" id="RHEA-COMP:10660"/>
        <dbReference type="Rhea" id="RHEA-COMP:10661"/>
        <dbReference type="ChEBI" id="CHEBI:30616"/>
        <dbReference type="ChEBI" id="CHEBI:33019"/>
        <dbReference type="ChEBI" id="CHEBI:46858"/>
        <dbReference type="ChEBI" id="CHEBI:83624"/>
        <dbReference type="EC" id="2.7.7.42"/>
    </reaction>
</comment>
<comment type="cofactor">
    <cofactor evidence="1">
        <name>Mg(2+)</name>
        <dbReference type="ChEBI" id="CHEBI:18420"/>
    </cofactor>
</comment>
<comment type="similarity">
    <text evidence="1">Belongs to the GlnE family.</text>
</comment>
<gene>
    <name evidence="1" type="primary">glnE</name>
    <name type="ordered locus">YPTS_3551</name>
</gene>
<proteinExistence type="inferred from homology"/>
<organism>
    <name type="scientific">Yersinia pseudotuberculosis serotype IB (strain PB1/+)</name>
    <dbReference type="NCBI Taxonomy" id="502801"/>
    <lineage>
        <taxon>Bacteria</taxon>
        <taxon>Pseudomonadati</taxon>
        <taxon>Pseudomonadota</taxon>
        <taxon>Gammaproteobacteria</taxon>
        <taxon>Enterobacterales</taxon>
        <taxon>Yersiniaceae</taxon>
        <taxon>Yersinia</taxon>
    </lineage>
</organism>
<sequence>MLPLPSELQIQAQSIKQRFSELPAPPDLRDEDIAVLALSDFVSDMLLIHPQWLEELHQQPPQPQEWQYYSQWLSQALAGVQDEAALLTALRLFRRRVMVRIAWSQVLQTSGTAETLQQLSTLAESMIIAARDWLYQVCCRELGTPCNRQGVPQPLLILGMGKLGGGELNFSSDIDLIFAYPENGQTQGGRRELDNAQFFTRLGQRLIKALDQHTIDGFVYRVDMRLRPFGDSGPLVLSFAALEDYYQEQGRDWERYAMVKARLMGGADDPYSQELRQMLRPFVFRRYIDFSVIQSLRNMKGMIAREVRRRGLKDNIKLGAGGIREIEFITQVFQLIRGGREPRLQERALLPTLQAVAELGLLPEQQVADLSGSYLFLRRLENLLQAIADEQTQTLPNDPLNQARLAWGMGYADWAAMSTALENHMQAVRVVFDDLIGDETPDIGEDPSHGLYKSLWQDVLEESDLAPLTPHLEEAARRQLLATISGFRHDVDKRTIGPRGREVLDQLMPRLFAEVCPRPDANVALSRLILLLLSIVTRTTYLELLVEYHAALKHVIRLCSASPMVASQLARYPLLLDELLDPQSLYQPLAPSAYRDELRQYLLRVPEDDEEQQLEALRQFKQAQQLRIAAGDITEALPVMKVSDHLTYLAEAIIDAVIQQAWNQMVARYGQPSHLQQSEGRGFAVIGYGKLGGWELGYSSDLDLVFLLDCPLDVMTDGDRSIDGRQFYLRLAQRIMHLFSTRTSSGILYEVDARLRPSGEAGMLVSTIEAFADYQRNEAWTWEHQALVRARIVYGSPKLHQQFDAIRQQILCRHREDPQLQQEVREMREKMRNHLGSKQRDIFDIKADAGGITDIEFIAQYLVLRYAASEPRLTRWSDNVRIFESMAHYDIMSPEEAAALTRAYVTMRDEIHHLALQEQSSKVAADSFIAEREQVAASWHKWLAANDANVS</sequence>
<accession>B2K2H5</accession>
<feature type="chain" id="PRO_1000133927" description="Bifunctional glutamine synthetase adenylyltransferase/adenylyl-removing enzyme">
    <location>
        <begin position="1"/>
        <end position="951"/>
    </location>
</feature>
<feature type="region of interest" description="Adenylyl removase" evidence="1">
    <location>
        <begin position="1"/>
        <end position="440"/>
    </location>
</feature>
<feature type="region of interest" description="Adenylyl transferase" evidence="1">
    <location>
        <begin position="449"/>
        <end position="951"/>
    </location>
</feature>
<keyword id="KW-0067">ATP-binding</keyword>
<keyword id="KW-0460">Magnesium</keyword>
<keyword id="KW-0511">Multifunctional enzyme</keyword>
<keyword id="KW-0547">Nucleotide-binding</keyword>
<keyword id="KW-0548">Nucleotidyltransferase</keyword>
<keyword id="KW-0808">Transferase</keyword>
<protein>
    <recommendedName>
        <fullName evidence="1">Bifunctional glutamine synthetase adenylyltransferase/adenylyl-removing enzyme</fullName>
    </recommendedName>
    <alternativeName>
        <fullName evidence="1">ATP:glutamine synthetase adenylyltransferase</fullName>
    </alternativeName>
    <alternativeName>
        <fullName evidence="1">ATase</fullName>
    </alternativeName>
    <domain>
        <recommendedName>
            <fullName evidence="1">Glutamine synthetase adenylyl-L-tyrosine phosphorylase</fullName>
            <ecNumber evidence="1">2.7.7.89</ecNumber>
        </recommendedName>
        <alternativeName>
            <fullName evidence="1">Adenylyl removase</fullName>
            <shortName evidence="1">AR</shortName>
            <shortName evidence="1">AT-N</shortName>
        </alternativeName>
    </domain>
    <domain>
        <recommendedName>
            <fullName evidence="1">Glutamine synthetase adenylyl transferase</fullName>
            <ecNumber evidence="1">2.7.7.42</ecNumber>
        </recommendedName>
        <alternativeName>
            <fullName evidence="1">Adenylyl transferase</fullName>
            <shortName evidence="1">AT</shortName>
            <shortName evidence="1">AT-C</shortName>
        </alternativeName>
    </domain>
</protein>
<dbReference type="EC" id="2.7.7.89" evidence="1"/>
<dbReference type="EC" id="2.7.7.42" evidence="1"/>
<dbReference type="EMBL" id="CP001048">
    <property type="protein sequence ID" value="ACC90504.1"/>
    <property type="molecule type" value="Genomic_DNA"/>
</dbReference>
<dbReference type="RefSeq" id="WP_002212194.1">
    <property type="nucleotide sequence ID" value="NZ_CP009780.1"/>
</dbReference>
<dbReference type="SMR" id="B2K2H5"/>
<dbReference type="GeneID" id="57973971"/>
<dbReference type="KEGG" id="ypb:YPTS_3551"/>
<dbReference type="PATRIC" id="fig|502801.10.peg.2999"/>
<dbReference type="GO" id="GO:0005829">
    <property type="term" value="C:cytosol"/>
    <property type="evidence" value="ECO:0007669"/>
    <property type="project" value="TreeGrafter"/>
</dbReference>
<dbReference type="GO" id="GO:0008882">
    <property type="term" value="F:[glutamate-ammonia-ligase] adenylyltransferase activity"/>
    <property type="evidence" value="ECO:0007669"/>
    <property type="project" value="UniProtKB-UniRule"/>
</dbReference>
<dbReference type="GO" id="GO:0047388">
    <property type="term" value="F:[glutamine synthetase]-adenylyl-L-tyrosine phosphorylase activity"/>
    <property type="evidence" value="ECO:0007669"/>
    <property type="project" value="UniProtKB-EC"/>
</dbReference>
<dbReference type="GO" id="GO:0005524">
    <property type="term" value="F:ATP binding"/>
    <property type="evidence" value="ECO:0007669"/>
    <property type="project" value="UniProtKB-UniRule"/>
</dbReference>
<dbReference type="GO" id="GO:0000287">
    <property type="term" value="F:magnesium ion binding"/>
    <property type="evidence" value="ECO:0007669"/>
    <property type="project" value="UniProtKB-UniRule"/>
</dbReference>
<dbReference type="GO" id="GO:0000820">
    <property type="term" value="P:regulation of glutamine family amino acid metabolic process"/>
    <property type="evidence" value="ECO:0007669"/>
    <property type="project" value="UniProtKB-UniRule"/>
</dbReference>
<dbReference type="CDD" id="cd05401">
    <property type="entry name" value="NT_GlnE_GlnD_like"/>
    <property type="match status" value="2"/>
</dbReference>
<dbReference type="FunFam" id="1.10.4050.10:FF:000001">
    <property type="entry name" value="Bifunctional glutamine synthetase adenylyltransferase/adenylyl-removing enzyme"/>
    <property type="match status" value="1"/>
</dbReference>
<dbReference type="FunFam" id="1.20.120.1510:FF:000001">
    <property type="entry name" value="Bifunctional glutamine synthetase adenylyltransferase/adenylyl-removing enzyme"/>
    <property type="match status" value="1"/>
</dbReference>
<dbReference type="FunFam" id="1.20.120.330:FF:000005">
    <property type="entry name" value="Bifunctional glutamine synthetase adenylyltransferase/adenylyl-removing enzyme"/>
    <property type="match status" value="1"/>
</dbReference>
<dbReference type="FunFam" id="1.20.120.330:FF:000008">
    <property type="entry name" value="Bifunctional glutamine synthetase adenylyltransferase/adenylyl-removing enzyme"/>
    <property type="match status" value="1"/>
</dbReference>
<dbReference type="FunFam" id="3.30.460.10:FF:000009">
    <property type="entry name" value="Bifunctional glutamine synthetase adenylyltransferase/adenylyl-removing enzyme"/>
    <property type="match status" value="1"/>
</dbReference>
<dbReference type="FunFam" id="3.30.460.10:FF:000014">
    <property type="entry name" value="Bifunctional glutamine synthetase adenylyltransferase/adenylyl-removing enzyme"/>
    <property type="match status" value="1"/>
</dbReference>
<dbReference type="Gene3D" id="1.20.120.1510">
    <property type="match status" value="1"/>
</dbReference>
<dbReference type="Gene3D" id="3.30.460.10">
    <property type="entry name" value="Beta Polymerase, domain 2"/>
    <property type="match status" value="2"/>
</dbReference>
<dbReference type="Gene3D" id="1.10.4050.10">
    <property type="entry name" value="Glutamine synthase adenylyltransferase GlnE"/>
    <property type="match status" value="1"/>
</dbReference>
<dbReference type="Gene3D" id="1.20.120.330">
    <property type="entry name" value="Nucleotidyltransferases domain 2"/>
    <property type="match status" value="2"/>
</dbReference>
<dbReference type="HAMAP" id="MF_00802">
    <property type="entry name" value="GlnE"/>
    <property type="match status" value="1"/>
</dbReference>
<dbReference type="InterPro" id="IPR023057">
    <property type="entry name" value="GlnE"/>
</dbReference>
<dbReference type="InterPro" id="IPR005190">
    <property type="entry name" value="GlnE_rpt_dom"/>
</dbReference>
<dbReference type="InterPro" id="IPR043519">
    <property type="entry name" value="NT_sf"/>
</dbReference>
<dbReference type="InterPro" id="IPR013546">
    <property type="entry name" value="PII_UdlTrfase/GS_AdlTrfase"/>
</dbReference>
<dbReference type="NCBIfam" id="NF008292">
    <property type="entry name" value="PRK11072.1"/>
    <property type="match status" value="1"/>
</dbReference>
<dbReference type="PANTHER" id="PTHR30621:SF0">
    <property type="entry name" value="BIFUNCTIONAL GLUTAMINE SYNTHETASE ADENYLYLTRANSFERASE_ADENYLYL-REMOVING ENZYME"/>
    <property type="match status" value="1"/>
</dbReference>
<dbReference type="PANTHER" id="PTHR30621">
    <property type="entry name" value="GLUTAMINE SYNTHETASE ADENYLYLTRANSFERASE"/>
    <property type="match status" value="1"/>
</dbReference>
<dbReference type="Pfam" id="PF08335">
    <property type="entry name" value="GlnD_UR_UTase"/>
    <property type="match status" value="2"/>
</dbReference>
<dbReference type="Pfam" id="PF03710">
    <property type="entry name" value="GlnE"/>
    <property type="match status" value="2"/>
</dbReference>
<dbReference type="SUPFAM" id="SSF81301">
    <property type="entry name" value="Nucleotidyltransferase"/>
    <property type="match status" value="2"/>
</dbReference>
<dbReference type="SUPFAM" id="SSF81593">
    <property type="entry name" value="Nucleotidyltransferase substrate binding subunit/domain"/>
    <property type="match status" value="2"/>
</dbReference>
<evidence type="ECO:0000255" key="1">
    <source>
        <dbReference type="HAMAP-Rule" id="MF_00802"/>
    </source>
</evidence>